<dbReference type="EMBL" id="CP001368">
    <property type="protein sequence ID" value="ACT74397.1"/>
    <property type="molecule type" value="Genomic_DNA"/>
</dbReference>
<dbReference type="RefSeq" id="WP_001301454.1">
    <property type="nucleotide sequence ID" value="NC_013008.1"/>
</dbReference>
<dbReference type="PDB" id="2YKT">
    <property type="method" value="X-ray"/>
    <property type="resolution" value="2.11 A"/>
    <property type="chains" value="B=452-463"/>
</dbReference>
<dbReference type="PDBsum" id="2YKT"/>
<dbReference type="SMR" id="C6UYL8"/>
<dbReference type="KEGG" id="etw:ECSP_4676"/>
<dbReference type="HOGENOM" id="CLU_497576_0_0_6"/>
<dbReference type="EvolutionaryTrace" id="C6UYL8"/>
<dbReference type="GO" id="GO:0005576">
    <property type="term" value="C:extracellular region"/>
    <property type="evidence" value="ECO:0007669"/>
    <property type="project" value="UniProtKB-SubCell"/>
</dbReference>
<dbReference type="GO" id="GO:0020002">
    <property type="term" value="C:host cell plasma membrane"/>
    <property type="evidence" value="ECO:0007669"/>
    <property type="project" value="UniProtKB-SubCell"/>
</dbReference>
<dbReference type="GO" id="GO:0016020">
    <property type="term" value="C:membrane"/>
    <property type="evidence" value="ECO:0007669"/>
    <property type="project" value="UniProtKB-KW"/>
</dbReference>
<dbReference type="Gene3D" id="4.10.820.10">
    <property type="entry name" value="Translocated intimin receptor, central domain"/>
    <property type="match status" value="1"/>
</dbReference>
<dbReference type="InterPro" id="IPR037003">
    <property type="entry name" value="Tir_central_sf"/>
</dbReference>
<dbReference type="InterPro" id="IPR022638">
    <property type="entry name" value="Transloc_intimin_rcpt"/>
</dbReference>
<dbReference type="InterPro" id="IPR022639">
    <property type="entry name" value="Transloc_intimin_rcpt_C"/>
</dbReference>
<dbReference type="InterPro" id="IPR003536">
    <property type="entry name" value="Transloc_intimin_rcpt_cen_dom"/>
</dbReference>
<dbReference type="InterPro" id="IPR022633">
    <property type="entry name" value="Transloc_intimin_rcpt_N"/>
</dbReference>
<dbReference type="NCBIfam" id="NF033637">
    <property type="entry name" value="transloc_TIR"/>
    <property type="match status" value="1"/>
</dbReference>
<dbReference type="Pfam" id="PF07489">
    <property type="entry name" value="Tir_receptor_C"/>
    <property type="match status" value="1"/>
</dbReference>
<dbReference type="Pfam" id="PF03549">
    <property type="entry name" value="Tir_receptor_M"/>
    <property type="match status" value="1"/>
</dbReference>
<dbReference type="Pfam" id="PF07490">
    <property type="entry name" value="Tir_receptor_N"/>
    <property type="match status" value="1"/>
</dbReference>
<dbReference type="PRINTS" id="PR01370">
    <property type="entry name" value="TRNSINTIMINR"/>
</dbReference>
<keyword id="KW-0002">3D-structure</keyword>
<keyword id="KW-1032">Host cell membrane</keyword>
<keyword id="KW-1043">Host membrane</keyword>
<keyword id="KW-0472">Membrane</keyword>
<keyword id="KW-0597">Phosphoprotein</keyword>
<keyword id="KW-0675">Receptor</keyword>
<keyword id="KW-0964">Secreted</keyword>
<keyword id="KW-0812">Transmembrane</keyword>
<keyword id="KW-1133">Transmembrane helix</keyword>
<keyword id="KW-0843">Virulence</keyword>
<reference key="1">
    <citation type="journal article" date="2009" name="Infect. Immun.">
        <title>Analysis of the genome of the Escherichia coli O157:H7 2006 spinach-associated outbreak isolate indicates candidate genes that may enhance virulence.</title>
        <authorList>
            <person name="Kulasekara B.R."/>
            <person name="Jacobs M."/>
            <person name="Zhou Y."/>
            <person name="Wu Z."/>
            <person name="Sims E."/>
            <person name="Saenphimmachak C."/>
            <person name="Rohmer L."/>
            <person name="Ritchie J.M."/>
            <person name="Radey M."/>
            <person name="McKevitt M."/>
            <person name="Freeman T.L."/>
            <person name="Hayden H."/>
            <person name="Haugen E."/>
            <person name="Gillett W."/>
            <person name="Fong C."/>
            <person name="Chang J."/>
            <person name="Beskhlebnaya V."/>
            <person name="Waldor M.K."/>
            <person name="Samadpour M."/>
            <person name="Whittam T.S."/>
            <person name="Kaul R."/>
            <person name="Brittnacher M."/>
            <person name="Miller S.I."/>
        </authorList>
    </citation>
    <scope>NUCLEOTIDE SEQUENCE [LARGE SCALE GENOMIC DNA]</scope>
    <source>
        <strain>TW14359 / EHEC</strain>
    </source>
</reference>
<feature type="chain" id="PRO_0000414057" description="Translocated intimin receptor Tir">
    <location>
        <begin position="1"/>
        <end position="558"/>
    </location>
</feature>
<feature type="topological domain" description="Cytoplasmic" evidence="2">
    <location>
        <begin position="1"/>
        <end position="230"/>
    </location>
</feature>
<feature type="transmembrane region" description="Helical" evidence="2">
    <location>
        <begin position="231"/>
        <end position="251"/>
    </location>
</feature>
<feature type="topological domain" description="Extracellular" evidence="2">
    <location>
        <begin position="252"/>
        <end position="362"/>
    </location>
</feature>
<feature type="transmembrane region" description="Helical" evidence="2">
    <location>
        <begin position="363"/>
        <end position="383"/>
    </location>
</feature>
<feature type="topological domain" description="Cytoplasmic" evidence="2">
    <location>
        <begin position="384"/>
        <end position="558"/>
    </location>
</feature>
<feature type="region of interest" description="Disordered" evidence="3">
    <location>
        <begin position="1"/>
        <end position="44"/>
    </location>
</feature>
<feature type="region of interest" description="Disordered" evidence="3">
    <location>
        <begin position="182"/>
        <end position="226"/>
    </location>
</feature>
<feature type="region of interest" description="Disordered" evidence="3">
    <location>
        <begin position="257"/>
        <end position="280"/>
    </location>
</feature>
<feature type="region of interest" description="Disordered" evidence="3">
    <location>
        <begin position="388"/>
        <end position="451"/>
    </location>
</feature>
<feature type="region of interest" description="Disordered" evidence="3">
    <location>
        <begin position="533"/>
        <end position="558"/>
    </location>
</feature>
<feature type="short sequence motif" description="Essential for actin pedestal formation" evidence="1">
    <location>
        <begin position="456"/>
        <end position="458"/>
    </location>
</feature>
<feature type="compositionally biased region" description="Basic and acidic residues" evidence="3">
    <location>
        <begin position="182"/>
        <end position="205"/>
    </location>
</feature>
<feature type="compositionally biased region" description="Low complexity" evidence="3">
    <location>
        <begin position="213"/>
        <end position="224"/>
    </location>
</feature>
<feature type="compositionally biased region" description="Low complexity" evidence="3">
    <location>
        <begin position="257"/>
        <end position="277"/>
    </location>
</feature>
<feature type="compositionally biased region" description="Low complexity" evidence="3">
    <location>
        <begin position="393"/>
        <end position="403"/>
    </location>
</feature>
<feature type="compositionally biased region" description="Polar residues" evidence="3">
    <location>
        <begin position="404"/>
        <end position="424"/>
    </location>
</feature>
<feature type="compositionally biased region" description="Low complexity" evidence="3">
    <location>
        <begin position="436"/>
        <end position="450"/>
    </location>
</feature>
<feature type="compositionally biased region" description="Polar residues" evidence="3">
    <location>
        <begin position="538"/>
        <end position="548"/>
    </location>
</feature>
<feature type="turn" evidence="5">
    <location>
        <begin position="457"/>
        <end position="460"/>
    </location>
</feature>
<accession>C6UYL8</accession>
<proteinExistence type="evidence at protein level"/>
<gene>
    <name type="primary">tir</name>
    <name type="synonym">espE</name>
    <name type="ordered locus">ECSP_4676</name>
</gene>
<name>TIR_ECO5T</name>
<organism>
    <name type="scientific">Escherichia coli O157:H7 (strain TW14359 / EHEC)</name>
    <dbReference type="NCBI Taxonomy" id="544404"/>
    <lineage>
        <taxon>Bacteria</taxon>
        <taxon>Pseudomonadati</taxon>
        <taxon>Pseudomonadota</taxon>
        <taxon>Gammaproteobacteria</taxon>
        <taxon>Enterobacterales</taxon>
        <taxon>Enterobacteriaceae</taxon>
        <taxon>Escherichia</taxon>
    </lineage>
</organism>
<protein>
    <recommendedName>
        <fullName>Translocated intimin receptor Tir</fullName>
    </recommendedName>
    <alternativeName>
        <fullName>Secreted effector protein Tir</fullName>
    </alternativeName>
</protein>
<evidence type="ECO:0000250" key="1"/>
<evidence type="ECO:0000255" key="2"/>
<evidence type="ECO:0000256" key="3">
    <source>
        <dbReference type="SAM" id="MobiDB-lite"/>
    </source>
</evidence>
<evidence type="ECO:0000305" key="4"/>
<evidence type="ECO:0007829" key="5">
    <source>
        <dbReference type="PDB" id="2YKT"/>
    </source>
</evidence>
<comment type="function">
    <text evidence="1">Multifunctional protein that is required for efficient pedestal formation in host epithelial cells during infection. The extracellular region acts as a receptor for bacterial intimin, allowing the bacterium to attach tightly to the host-cell surface. Simultaneously, the intracellular region initiates a signaling cascade in the host cell, which leads to actin polymerization and formation of actin pedestals at the sites of bacterial adhesion (By similarity).</text>
</comment>
<comment type="subunit">
    <text evidence="1">Interacts with intimin and host proteins.</text>
</comment>
<comment type="subcellular location">
    <subcellularLocation>
        <location evidence="1">Secreted</location>
    </subcellularLocation>
    <subcellularLocation>
        <location evidence="1">Host cell membrane</location>
        <topology evidence="1">Multi-pass membrane protein</topology>
    </subcellularLocation>
    <text evidence="1">Secreted via the type III secretion system (T3SS). Released into the host cytoplasm via T3SS and then independently inserts into the plasma membrane from a cytoplasmic location. In host cells, localizes to the tip of the actin pedestal (By similarity).</text>
</comment>
<comment type="PTM">
    <text evidence="1">Phosphorylated by host kinases.</text>
</comment>
<comment type="similarity">
    <text evidence="4">Belongs to the Tir receptor family.</text>
</comment>
<sequence>MPIGNLGHNPNVNNSIPPAPPLPSQTDGAGGRGQLINSTGPLGSRALFTPVRNSMADSGDNRASDVPGLPVNPMRLAASEITLNDGFEVLHDHGPLDTLNRQIGSSVFRVETQEDGKHIAVGQRNGVETSVVLSDQEYARLQSIDPEGKDKFVFTGGRGGAGHAMVTVASDITEARQRILELLEPKGTGESKGAGESKGVGELRESNSGAENTTETQTSTSTSSLRSDPKLWLALGTVATGLIGLAATGIVQALALTPEPDSPTTTDPDAAASATETATRDQLTKEAFQNPDNQKVNIDELGNAIPSGVLKDDVVANIEEQAKAAGEEAKQQAIENNAQAQKKYDEQQAKRQEELKVSSGAGYGLSGALILGGGIGVAVTAALHRKNQPVEQTTTTTTTTTTTSARTVENKPANNTPAQGNVDTPGSEDTMESRRSSMASTSSTFFDTSSIGTVQNPYADVKTSLHDSQVPTSNSNTSVQNMGNTDSVVYSTIQHPPRDTTDNGARLLGNPSAGIQSTYARLALSGGLRHDMGGLTGGSNSAVNTSNNPPAPGSHRFV</sequence>